<accession>P14984</accession>
<accession>Q91J28</accession>
<organism>
    <name type="scientific">Beet curly top virus (strain California/Logan)</name>
    <name type="common">BCTV</name>
    <dbReference type="NCBI Taxonomy" id="268960"/>
    <lineage>
        <taxon>Viruses</taxon>
        <taxon>Monodnaviria</taxon>
        <taxon>Shotokuvirae</taxon>
        <taxon>Cressdnaviricota</taxon>
        <taxon>Repensiviricetes</taxon>
        <taxon>Geplafuvirales</taxon>
        <taxon>Geminiviridae</taxon>
        <taxon>Curtovirus</taxon>
        <taxon>Beet curly top virus</taxon>
    </lineage>
</organism>
<organismHost>
    <name type="scientific">Beta vulgaris</name>
    <name type="common">Sugar beet</name>
    <dbReference type="NCBI Taxonomy" id="161934"/>
</organismHost>
<organismHost>
    <name type="scientific">Capsicum</name>
    <name type="common">peppers</name>
    <dbReference type="NCBI Taxonomy" id="4071"/>
</organismHost>
<organismHost>
    <name type="scientific">Cucurbitaceae</name>
    <dbReference type="NCBI Taxonomy" id="3650"/>
</organismHost>
<organismHost>
    <name type="scientific">Linum</name>
    <dbReference type="NCBI Taxonomy" id="4005"/>
</organismHost>
<organismHost>
    <name type="scientific">Phaseolus vulgaris</name>
    <name type="common">Kidney bean</name>
    <name type="synonym">French bean</name>
    <dbReference type="NCBI Taxonomy" id="3885"/>
</organismHost>
<organismHost>
    <name type="scientific">Solanum lycopersicum</name>
    <name type="common">Tomato</name>
    <name type="synonym">Lycopersicon esculentum</name>
    <dbReference type="NCBI Taxonomy" id="4081"/>
</organismHost>
<organismHost>
    <name type="scientific">Solanum tuberosum</name>
    <name type="common">Potato</name>
    <dbReference type="NCBI Taxonomy" id="4113"/>
</organismHost>
<organismHost>
    <name type="scientific">Spinacia oleracea</name>
    <name type="common">Spinach</name>
    <dbReference type="NCBI Taxonomy" id="3562"/>
</organismHost>
<protein>
    <recommendedName>
        <fullName>Capsid protein</fullName>
    </recommendedName>
    <alternativeName>
        <fullName>Coat protein</fullName>
        <shortName>CP</shortName>
    </alternativeName>
</protein>
<reference key="1">
    <citation type="journal article" date="1986" name="EMBO J.">
        <title>The nucleotide sequence of an infectious clone of the geminivirus beet curly top virus.</title>
        <authorList>
            <person name="Stanley J."/>
            <person name="Markham P.G."/>
            <person name="Callis R.J."/>
            <person name="Pinner M.S."/>
        </authorList>
    </citation>
    <scope>NUCLEOTIDE SEQUENCE [GENOMIC DNA]</scope>
    <source>
        <strain>Infectious clone pBCT028</strain>
    </source>
</reference>
<reference key="2">
    <citation type="submission" date="2001-05" db="EMBL/GenBank/DDBJ databases">
        <authorList>
            <person name="Bisaro D.M."/>
            <person name="Hormuzdi S.G."/>
        </authorList>
    </citation>
    <scope>NUCLEOTIDE SEQUENCE [GENOMIC DNA]</scope>
</reference>
<reference key="3">
    <citation type="journal article" date="1993" name="Virology">
        <title>Genetic analysis of beet curly top virus: evidence for three virion sense genes involved in movement and regulation of single- and double-stranded DNA levels.</title>
        <authorList>
            <person name="Hormuzdi S.G."/>
            <person name="Bisaro D.M."/>
        </authorList>
    </citation>
    <scope>IDENTIFICATION</scope>
</reference>
<sequence>MRKYTRNTYTMSQKRKVNPQSAWPKKRRTSTTSRKYQWRRPVTKNRTLKLKMYDDMLGAGGIGSTISNNGMITMLNNYVQGIGDSQRARNVTVTKHLKFDMALMGSSQFWETPNYMTQYHWIIIDKDVGSVFPTKLSSIFDIPDNGQAMPSTYRIRRDMNERFIVKKKWRTHLMSTGTGYGGKETYKAPSMPNYKKPMNINVRNLNMRTIWKDTGGGKYEDVKENALLYVVVNDNTDNTNMYATLFGNCRCYFY</sequence>
<comment type="function">
    <text evidence="1">Encapsidates the viral genome into characteristic twinned ('geminate') particles. Binds the genomic viral ssDNA and shuttles it into and out of the cell nucleus. Plays a role in protection of the genome from degradation, virus acquisition and transmission by insect vectors, infectivity, and systemic movement. The CP of monopartite geminiviruses is absolutely essential for virus movement (By similarity).</text>
</comment>
<comment type="subunit">
    <text evidence="1">Homomultimer. Binds to single-stranded and double-stranded viral DNA. Interacts (via nuclear localization signal) with host importin alpha-1a (By similarity).</text>
</comment>
<comment type="subcellular location">
    <subcellularLocation>
        <location evidence="1">Virion</location>
    </subcellularLocation>
    <subcellularLocation>
        <location evidence="1">Host nucleus</location>
    </subcellularLocation>
    <text evidence="1">It is actively transported into the host cell nucleus. It may be exported out of the nucleus through a nuclear export signal for cell-to-cell movement and spread (By similarity).</text>
</comment>
<comment type="similarity">
    <text evidence="3">Belongs to the geminiviridae capsid protein family.</text>
</comment>
<proteinExistence type="inferred from homology"/>
<evidence type="ECO:0000250" key="1"/>
<evidence type="ECO:0000256" key="2">
    <source>
        <dbReference type="SAM" id="MobiDB-lite"/>
    </source>
</evidence>
<evidence type="ECO:0000305" key="3"/>
<gene>
    <name type="ORF">V1</name>
</gene>
<keyword id="KW-0167">Capsid protein</keyword>
<keyword id="KW-0238">DNA-binding</keyword>
<keyword id="KW-1048">Host nucleus</keyword>
<keyword id="KW-1185">Reference proteome</keyword>
<keyword id="KW-1140">T=1 icosahedral capsid protein</keyword>
<keyword id="KW-1163">Viral penetration into host nucleus</keyword>
<keyword id="KW-0946">Virion</keyword>
<keyword id="KW-1160">Virus entry into host cell</keyword>
<dbReference type="EMBL" id="M24597">
    <property type="protein sequence ID" value="AAA42753.1"/>
    <property type="molecule type" value="Genomic_DNA"/>
</dbReference>
<dbReference type="EMBL" id="AF379637">
    <property type="protein sequence ID" value="AAK59258.1"/>
    <property type="molecule type" value="Genomic_DNA"/>
</dbReference>
<dbReference type="PIR" id="S28362">
    <property type="entry name" value="S28362"/>
</dbReference>
<dbReference type="SMR" id="P14984"/>
<dbReference type="KEGG" id="vg:2546429"/>
<dbReference type="Proteomes" id="UP000006542">
    <property type="component" value="Genome"/>
</dbReference>
<dbReference type="GO" id="GO:0043657">
    <property type="term" value="C:host cell"/>
    <property type="evidence" value="ECO:0007669"/>
    <property type="project" value="GOC"/>
</dbReference>
<dbReference type="GO" id="GO:0042025">
    <property type="term" value="C:host cell nucleus"/>
    <property type="evidence" value="ECO:0007669"/>
    <property type="project" value="UniProtKB-SubCell"/>
</dbReference>
<dbReference type="GO" id="GO:0039615">
    <property type="term" value="C:T=1 icosahedral viral capsid"/>
    <property type="evidence" value="ECO:0007669"/>
    <property type="project" value="UniProtKB-KW"/>
</dbReference>
<dbReference type="GO" id="GO:0003677">
    <property type="term" value="F:DNA binding"/>
    <property type="evidence" value="ECO:0007669"/>
    <property type="project" value="UniProtKB-KW"/>
</dbReference>
<dbReference type="GO" id="GO:0005198">
    <property type="term" value="F:structural molecule activity"/>
    <property type="evidence" value="ECO:0007669"/>
    <property type="project" value="InterPro"/>
</dbReference>
<dbReference type="GO" id="GO:0046718">
    <property type="term" value="P:symbiont entry into host cell"/>
    <property type="evidence" value="ECO:0007669"/>
    <property type="project" value="UniProtKB-KW"/>
</dbReference>
<dbReference type="GO" id="GO:0075732">
    <property type="term" value="P:viral penetration into host nucleus"/>
    <property type="evidence" value="ECO:0007669"/>
    <property type="project" value="UniProtKB-KW"/>
</dbReference>
<dbReference type="Gene3D" id="2.60.120.20">
    <property type="match status" value="1"/>
</dbReference>
<dbReference type="InterPro" id="IPR000143">
    <property type="entry name" value="Gemcoat_MSV"/>
</dbReference>
<dbReference type="InterPro" id="IPR000263">
    <property type="entry name" value="GV_A/BR1_coat"/>
</dbReference>
<dbReference type="InterPro" id="IPR029053">
    <property type="entry name" value="Viral_coat"/>
</dbReference>
<dbReference type="Pfam" id="PF00844">
    <property type="entry name" value="Gemini_coat"/>
    <property type="match status" value="1"/>
</dbReference>
<dbReference type="PRINTS" id="PR00223">
    <property type="entry name" value="GEMCOATARBR1"/>
</dbReference>
<dbReference type="PRINTS" id="PR00226">
    <property type="entry name" value="GEMCOATMSV"/>
</dbReference>
<name>CAPSD_BCTVC</name>
<feature type="chain" id="PRO_0000222178" description="Capsid protein">
    <location>
        <begin position="1"/>
        <end position="254"/>
    </location>
</feature>
<feature type="region of interest" description="Disordered" evidence="2">
    <location>
        <begin position="1"/>
        <end position="38"/>
    </location>
</feature>
<feature type="short sequence motif" description="Bipartite nuclear localization signal" evidence="1">
    <location>
        <begin position="10"/>
        <end position="35"/>
    </location>
</feature>
<feature type="compositionally biased region" description="Polar residues" evidence="2">
    <location>
        <begin position="1"/>
        <end position="12"/>
    </location>
</feature>
<feature type="sequence variant" description="In strain: Infectious clone pBCT028.">
    <original>R</original>
    <variation>K</variation>
    <location>
        <position position="89"/>
    </location>
</feature>
<feature type="sequence variant" description="In strain: Infectious clone pBCT028.">
    <original>V</original>
    <variation>G</variation>
    <location>
        <position position="165"/>
    </location>
</feature>
<feature type="sequence variant" description="In strain: Infectious clone pBCT028.">
    <original>L</original>
    <variation>W</variation>
    <location>
        <position position="173"/>
    </location>
</feature>